<accession>Q1G8A5</accession>
<protein>
    <recommendedName>
        <fullName evidence="1">Ribosomal RNA small subunit methyltransferase G</fullName>
        <ecNumber evidence="1">2.1.1.-</ecNumber>
    </recommendedName>
    <alternativeName>
        <fullName evidence="1">16S rRNA 7-methylguanosine methyltransferase</fullName>
        <shortName evidence="1">16S rRNA m7G methyltransferase</shortName>
    </alternativeName>
</protein>
<comment type="function">
    <text evidence="1">Specifically methylates the N7 position of a guanine in 16S rRNA.</text>
</comment>
<comment type="subcellular location">
    <subcellularLocation>
        <location evidence="1">Cytoplasm</location>
    </subcellularLocation>
</comment>
<comment type="similarity">
    <text evidence="1">Belongs to the methyltransferase superfamily. RNA methyltransferase RsmG family.</text>
</comment>
<dbReference type="EC" id="2.1.1.-" evidence="1"/>
<dbReference type="EMBL" id="CR954253">
    <property type="protein sequence ID" value="CAI98794.1"/>
    <property type="molecule type" value="Genomic_DNA"/>
</dbReference>
<dbReference type="RefSeq" id="WP_011544303.1">
    <property type="nucleotide sequence ID" value="NC_008054.1"/>
</dbReference>
<dbReference type="SMR" id="Q1G8A5"/>
<dbReference type="STRING" id="390333.Ldb2056"/>
<dbReference type="KEGG" id="ldb:Ldb2056"/>
<dbReference type="PATRIC" id="fig|390333.13.peg.1484"/>
<dbReference type="eggNOG" id="COG0357">
    <property type="taxonomic scope" value="Bacteria"/>
</dbReference>
<dbReference type="HOGENOM" id="CLU_065341_0_0_9"/>
<dbReference type="BioCyc" id="LDEL390333:LDB_RS08960-MONOMER"/>
<dbReference type="Proteomes" id="UP000001259">
    <property type="component" value="Chromosome"/>
</dbReference>
<dbReference type="GO" id="GO:0005829">
    <property type="term" value="C:cytosol"/>
    <property type="evidence" value="ECO:0007669"/>
    <property type="project" value="TreeGrafter"/>
</dbReference>
<dbReference type="GO" id="GO:0070043">
    <property type="term" value="F:rRNA (guanine-N7-)-methyltransferase activity"/>
    <property type="evidence" value="ECO:0007669"/>
    <property type="project" value="UniProtKB-UniRule"/>
</dbReference>
<dbReference type="CDD" id="cd02440">
    <property type="entry name" value="AdoMet_MTases"/>
    <property type="match status" value="1"/>
</dbReference>
<dbReference type="FunFam" id="3.40.50.150:FF:000041">
    <property type="entry name" value="Ribosomal RNA small subunit methyltransferase G"/>
    <property type="match status" value="1"/>
</dbReference>
<dbReference type="Gene3D" id="3.40.50.150">
    <property type="entry name" value="Vaccinia Virus protein VP39"/>
    <property type="match status" value="1"/>
</dbReference>
<dbReference type="HAMAP" id="MF_00074">
    <property type="entry name" value="16SrRNA_methyltr_G"/>
    <property type="match status" value="1"/>
</dbReference>
<dbReference type="InterPro" id="IPR003682">
    <property type="entry name" value="rRNA_ssu_MeTfrase_G"/>
</dbReference>
<dbReference type="InterPro" id="IPR029063">
    <property type="entry name" value="SAM-dependent_MTases_sf"/>
</dbReference>
<dbReference type="NCBIfam" id="TIGR00138">
    <property type="entry name" value="rsmG_gidB"/>
    <property type="match status" value="1"/>
</dbReference>
<dbReference type="PANTHER" id="PTHR31760">
    <property type="entry name" value="S-ADENOSYL-L-METHIONINE-DEPENDENT METHYLTRANSFERASES SUPERFAMILY PROTEIN"/>
    <property type="match status" value="1"/>
</dbReference>
<dbReference type="PANTHER" id="PTHR31760:SF0">
    <property type="entry name" value="S-ADENOSYL-L-METHIONINE-DEPENDENT METHYLTRANSFERASES SUPERFAMILY PROTEIN"/>
    <property type="match status" value="1"/>
</dbReference>
<dbReference type="Pfam" id="PF02527">
    <property type="entry name" value="GidB"/>
    <property type="match status" value="1"/>
</dbReference>
<dbReference type="PIRSF" id="PIRSF003078">
    <property type="entry name" value="GidB"/>
    <property type="match status" value="1"/>
</dbReference>
<dbReference type="SUPFAM" id="SSF53335">
    <property type="entry name" value="S-adenosyl-L-methionine-dependent methyltransferases"/>
    <property type="match status" value="1"/>
</dbReference>
<organism>
    <name type="scientific">Lactobacillus delbrueckii subsp. bulgaricus (strain ATCC 11842 / DSM 20081 / BCRC 10696 / JCM 1002 / NBRC 13953 / NCIMB 11778 / NCTC 12712 / WDCM 00102 / Lb 14)</name>
    <dbReference type="NCBI Taxonomy" id="390333"/>
    <lineage>
        <taxon>Bacteria</taxon>
        <taxon>Bacillati</taxon>
        <taxon>Bacillota</taxon>
        <taxon>Bacilli</taxon>
        <taxon>Lactobacillales</taxon>
        <taxon>Lactobacillaceae</taxon>
        <taxon>Lactobacillus</taxon>
    </lineage>
</organism>
<keyword id="KW-0963">Cytoplasm</keyword>
<keyword id="KW-0489">Methyltransferase</keyword>
<keyword id="KW-1185">Reference proteome</keyword>
<keyword id="KW-0698">rRNA processing</keyword>
<keyword id="KW-0949">S-adenosyl-L-methionine</keyword>
<keyword id="KW-0808">Transferase</keyword>
<feature type="chain" id="PRO_1000010158" description="Ribosomal RNA small subunit methyltransferase G">
    <location>
        <begin position="1"/>
        <end position="239"/>
    </location>
</feature>
<feature type="binding site" evidence="1">
    <location>
        <position position="79"/>
    </location>
    <ligand>
        <name>S-adenosyl-L-methionine</name>
        <dbReference type="ChEBI" id="CHEBI:59789"/>
    </ligand>
</feature>
<feature type="binding site" evidence="1">
    <location>
        <position position="84"/>
    </location>
    <ligand>
        <name>S-adenosyl-L-methionine</name>
        <dbReference type="ChEBI" id="CHEBI:59789"/>
    </ligand>
</feature>
<feature type="binding site" evidence="1">
    <location>
        <begin position="130"/>
        <end position="131"/>
    </location>
    <ligand>
        <name>S-adenosyl-L-methionine</name>
        <dbReference type="ChEBI" id="CHEBI:59789"/>
    </ligand>
</feature>
<feature type="binding site" evidence="1">
    <location>
        <position position="149"/>
    </location>
    <ligand>
        <name>S-adenosyl-L-methionine</name>
        <dbReference type="ChEBI" id="CHEBI:59789"/>
    </ligand>
</feature>
<proteinExistence type="inferred from homology"/>
<name>RSMG_LACDA</name>
<reference key="1">
    <citation type="journal article" date="2006" name="Proc. Natl. Acad. Sci. U.S.A.">
        <title>The complete genome sequence of Lactobacillus bulgaricus reveals extensive and ongoing reductive evolution.</title>
        <authorList>
            <person name="van de Guchte M."/>
            <person name="Penaud S."/>
            <person name="Grimaldi C."/>
            <person name="Barbe V."/>
            <person name="Bryson K."/>
            <person name="Nicolas P."/>
            <person name="Robert C."/>
            <person name="Oztas S."/>
            <person name="Mangenot S."/>
            <person name="Couloux A."/>
            <person name="Loux V."/>
            <person name="Dervyn R."/>
            <person name="Bossy R."/>
            <person name="Bolotin A."/>
            <person name="Batto J.-M."/>
            <person name="Walunas T."/>
            <person name="Gibrat J.-F."/>
            <person name="Bessieres P."/>
            <person name="Weissenbach J."/>
            <person name="Ehrlich S.D."/>
            <person name="Maguin E."/>
        </authorList>
    </citation>
    <scope>NUCLEOTIDE SEQUENCE [LARGE SCALE GENOMIC DNA]</scope>
    <source>
        <strain>ATCC 11842 / DSM 20081 / BCRC 10696 / JCM 1002 / NBRC 13953 / NCIMB 11778 / NCTC 12712 / WDCM 00102 / Lb 14</strain>
    </source>
</reference>
<sequence length="239" mass="26615">MNPELFAETLSKYNFKLSPVQEQQFKTYFKELVRVNEHVNLTRITDEDEVYLKHFYDSVTPLLLWPEVFAEGAKLCDVGAGAGFPSLPIKILRPDLEVTIVDSLGKRLNFLSDLLEKLGIEGVNLVHGRAEDVGQNPDYREKFDLVTARAVARMSVLSEYCLPLAKVGGKFLALKGPRADEELEDAKSALEKLGGEVVFTRVITLPGSTEVRTLVLVDKVEATPGKYPRQAGTPNRKPL</sequence>
<evidence type="ECO:0000255" key="1">
    <source>
        <dbReference type="HAMAP-Rule" id="MF_00074"/>
    </source>
</evidence>
<gene>
    <name evidence="1" type="primary">rsmG</name>
    <name type="ordered locus">Ldb2056</name>
</gene>